<comment type="similarity">
    <text evidence="1">Belongs to the UPF0325 family.</text>
</comment>
<sequence length="128" mass="15096">MYDNLKSLGITNPEEIDRYSLRQEANNDILKIYFQKDKGEFFAKSVKFKYPRQRKTVVADGVGQGYKEVQEISPNLRYIIDELDQICQRDRSEVDLKRKILDDLRHLESVVTNKISEIEADLEKLTRK</sequence>
<proteinExistence type="inferred from homology"/>
<keyword id="KW-1185">Reference proteome</keyword>
<name>YAEH_SHISS</name>
<reference key="1">
    <citation type="journal article" date="2005" name="Nucleic Acids Res.">
        <title>Genome dynamics and diversity of Shigella species, the etiologic agents of bacillary dysentery.</title>
        <authorList>
            <person name="Yang F."/>
            <person name="Yang J."/>
            <person name="Zhang X."/>
            <person name="Chen L."/>
            <person name="Jiang Y."/>
            <person name="Yan Y."/>
            <person name="Tang X."/>
            <person name="Wang J."/>
            <person name="Xiong Z."/>
            <person name="Dong J."/>
            <person name="Xue Y."/>
            <person name="Zhu Y."/>
            <person name="Xu X."/>
            <person name="Sun L."/>
            <person name="Chen S."/>
            <person name="Nie H."/>
            <person name="Peng J."/>
            <person name="Xu J."/>
            <person name="Wang Y."/>
            <person name="Yuan Z."/>
            <person name="Wen Y."/>
            <person name="Yao Z."/>
            <person name="Shen Y."/>
            <person name="Qiang B."/>
            <person name="Hou Y."/>
            <person name="Yu J."/>
            <person name="Jin Q."/>
        </authorList>
    </citation>
    <scope>NUCLEOTIDE SEQUENCE [LARGE SCALE GENOMIC DNA]</scope>
    <source>
        <strain>Ss046</strain>
    </source>
</reference>
<organism>
    <name type="scientific">Shigella sonnei (strain Ss046)</name>
    <dbReference type="NCBI Taxonomy" id="300269"/>
    <lineage>
        <taxon>Bacteria</taxon>
        <taxon>Pseudomonadati</taxon>
        <taxon>Pseudomonadota</taxon>
        <taxon>Gammaproteobacteria</taxon>
        <taxon>Enterobacterales</taxon>
        <taxon>Enterobacteriaceae</taxon>
        <taxon>Shigella</taxon>
    </lineage>
</organism>
<protein>
    <recommendedName>
        <fullName evidence="1">UPF0325 protein YaeH</fullName>
    </recommendedName>
</protein>
<dbReference type="EMBL" id="CP000038">
    <property type="protein sequence ID" value="AAZ86968.1"/>
    <property type="molecule type" value="Genomic_DNA"/>
</dbReference>
<dbReference type="RefSeq" id="WP_000272188.1">
    <property type="nucleotide sequence ID" value="NC_007384.1"/>
</dbReference>
<dbReference type="SMR" id="Q3Z5J4"/>
<dbReference type="KEGG" id="ssn:SSON_0176"/>
<dbReference type="HOGENOM" id="CLU_136774_0_0_6"/>
<dbReference type="Proteomes" id="UP000002529">
    <property type="component" value="Chromosome"/>
</dbReference>
<dbReference type="HAMAP" id="MF_01519">
    <property type="entry name" value="UPF0325"/>
    <property type="match status" value="1"/>
</dbReference>
<dbReference type="InterPro" id="IPR020911">
    <property type="entry name" value="UPF0325"/>
</dbReference>
<dbReference type="NCBIfam" id="NF010213">
    <property type="entry name" value="PRK13677.1"/>
    <property type="match status" value="1"/>
</dbReference>
<dbReference type="Pfam" id="PF11944">
    <property type="entry name" value="DUF3461"/>
    <property type="match status" value="1"/>
</dbReference>
<gene>
    <name evidence="1" type="primary">yaeH</name>
    <name type="ordered locus">SSON_0176</name>
</gene>
<feature type="chain" id="PRO_0000244255" description="UPF0325 protein YaeH">
    <location>
        <begin position="1"/>
        <end position="128"/>
    </location>
</feature>
<evidence type="ECO:0000255" key="1">
    <source>
        <dbReference type="HAMAP-Rule" id="MF_01519"/>
    </source>
</evidence>
<accession>Q3Z5J4</accession>